<gene>
    <name evidence="1" type="primary">dtd</name>
    <name type="ordered locus">Mpe_A3145</name>
</gene>
<name>DTD_METPP</name>
<proteinExistence type="inferred from homology"/>
<evidence type="ECO:0000255" key="1">
    <source>
        <dbReference type="HAMAP-Rule" id="MF_00518"/>
    </source>
</evidence>
<feature type="chain" id="PRO_1000050853" description="D-aminoacyl-tRNA deacylase">
    <location>
        <begin position="1"/>
        <end position="152"/>
    </location>
</feature>
<feature type="short sequence motif" description="Gly-cisPro motif, important for rejection of L-amino acids" evidence="1">
    <location>
        <begin position="137"/>
        <end position="138"/>
    </location>
</feature>
<protein>
    <recommendedName>
        <fullName evidence="1">D-aminoacyl-tRNA deacylase</fullName>
        <shortName evidence="1">DTD</shortName>
        <ecNumber evidence="1">3.1.1.96</ecNumber>
    </recommendedName>
    <alternativeName>
        <fullName evidence="1">Gly-tRNA(Ala) deacylase</fullName>
    </alternativeName>
</protein>
<accession>A2SKK9</accession>
<organism>
    <name type="scientific">Methylibium petroleiphilum (strain ATCC BAA-1232 / LMG 22953 / PM1)</name>
    <dbReference type="NCBI Taxonomy" id="420662"/>
    <lineage>
        <taxon>Bacteria</taxon>
        <taxon>Pseudomonadati</taxon>
        <taxon>Pseudomonadota</taxon>
        <taxon>Betaproteobacteria</taxon>
        <taxon>Burkholderiales</taxon>
        <taxon>Sphaerotilaceae</taxon>
        <taxon>Methylibium</taxon>
    </lineage>
</organism>
<sequence>MIALLQRVSQARVEVGGRRVGEIGPGLLVLVCAEPSDTGAVADKLVERLLKLRVFSDDAGKMNRSVVEAGGGLLIVSQFTLAADCSGGNRPSFSGAAPAEQGRVLYERLLATARSRHTPVECGEFGADMQVLLVNDGPVTIPLVVGHDKLRP</sequence>
<reference key="1">
    <citation type="journal article" date="2007" name="J. Bacteriol.">
        <title>Whole-genome analysis of the methyl tert-butyl ether-degrading beta-proteobacterium Methylibium petroleiphilum PM1.</title>
        <authorList>
            <person name="Kane S.R."/>
            <person name="Chakicherla A.Y."/>
            <person name="Chain P.S.G."/>
            <person name="Schmidt R."/>
            <person name="Shin M.W."/>
            <person name="Legler T.C."/>
            <person name="Scow K.M."/>
            <person name="Larimer F.W."/>
            <person name="Lucas S.M."/>
            <person name="Richardson P.M."/>
            <person name="Hristova K.R."/>
        </authorList>
    </citation>
    <scope>NUCLEOTIDE SEQUENCE [LARGE SCALE GENOMIC DNA]</scope>
    <source>
        <strain>ATCC BAA-1232 / LMG 22953 / PM1</strain>
    </source>
</reference>
<keyword id="KW-0963">Cytoplasm</keyword>
<keyword id="KW-0378">Hydrolase</keyword>
<keyword id="KW-1185">Reference proteome</keyword>
<keyword id="KW-0694">RNA-binding</keyword>
<keyword id="KW-0820">tRNA-binding</keyword>
<dbReference type="EC" id="3.1.1.96" evidence="1"/>
<dbReference type="EMBL" id="CP000555">
    <property type="protein sequence ID" value="ABM96098.1"/>
    <property type="molecule type" value="Genomic_DNA"/>
</dbReference>
<dbReference type="RefSeq" id="WP_011830721.1">
    <property type="nucleotide sequence ID" value="NC_008825.1"/>
</dbReference>
<dbReference type="SMR" id="A2SKK9"/>
<dbReference type="STRING" id="420662.Mpe_A3145"/>
<dbReference type="KEGG" id="mpt:Mpe_A3145"/>
<dbReference type="eggNOG" id="COG1490">
    <property type="taxonomic scope" value="Bacteria"/>
</dbReference>
<dbReference type="HOGENOM" id="CLU_076901_1_1_4"/>
<dbReference type="Proteomes" id="UP000000366">
    <property type="component" value="Chromosome"/>
</dbReference>
<dbReference type="GO" id="GO:0005737">
    <property type="term" value="C:cytoplasm"/>
    <property type="evidence" value="ECO:0007669"/>
    <property type="project" value="UniProtKB-SubCell"/>
</dbReference>
<dbReference type="GO" id="GO:0051500">
    <property type="term" value="F:D-tyrosyl-tRNA(Tyr) deacylase activity"/>
    <property type="evidence" value="ECO:0007669"/>
    <property type="project" value="TreeGrafter"/>
</dbReference>
<dbReference type="GO" id="GO:0106026">
    <property type="term" value="F:Gly-tRNA(Ala) deacylase activity"/>
    <property type="evidence" value="ECO:0007669"/>
    <property type="project" value="UniProtKB-UniRule"/>
</dbReference>
<dbReference type="GO" id="GO:0043908">
    <property type="term" value="F:Ser(Gly)-tRNA(Ala) hydrolase activity"/>
    <property type="evidence" value="ECO:0007669"/>
    <property type="project" value="UniProtKB-UniRule"/>
</dbReference>
<dbReference type="GO" id="GO:0000049">
    <property type="term" value="F:tRNA binding"/>
    <property type="evidence" value="ECO:0007669"/>
    <property type="project" value="UniProtKB-UniRule"/>
</dbReference>
<dbReference type="GO" id="GO:0019478">
    <property type="term" value="P:D-amino acid catabolic process"/>
    <property type="evidence" value="ECO:0007669"/>
    <property type="project" value="UniProtKB-UniRule"/>
</dbReference>
<dbReference type="FunFam" id="3.50.80.10:FF:000001">
    <property type="entry name" value="D-aminoacyl-tRNA deacylase"/>
    <property type="match status" value="1"/>
</dbReference>
<dbReference type="Gene3D" id="3.50.80.10">
    <property type="entry name" value="D-tyrosyl-tRNA(Tyr) deacylase"/>
    <property type="match status" value="1"/>
</dbReference>
<dbReference type="HAMAP" id="MF_00518">
    <property type="entry name" value="Deacylase_Dtd"/>
    <property type="match status" value="1"/>
</dbReference>
<dbReference type="InterPro" id="IPR003732">
    <property type="entry name" value="Daa-tRNA_deacyls_DTD"/>
</dbReference>
<dbReference type="InterPro" id="IPR023509">
    <property type="entry name" value="DTD-like_sf"/>
</dbReference>
<dbReference type="NCBIfam" id="TIGR00256">
    <property type="entry name" value="D-aminoacyl-tRNA deacylase"/>
    <property type="match status" value="1"/>
</dbReference>
<dbReference type="PANTHER" id="PTHR10472:SF5">
    <property type="entry name" value="D-AMINOACYL-TRNA DEACYLASE 1"/>
    <property type="match status" value="1"/>
</dbReference>
<dbReference type="PANTHER" id="PTHR10472">
    <property type="entry name" value="D-TYROSYL-TRNA TYR DEACYLASE"/>
    <property type="match status" value="1"/>
</dbReference>
<dbReference type="Pfam" id="PF02580">
    <property type="entry name" value="Tyr_Deacylase"/>
    <property type="match status" value="1"/>
</dbReference>
<dbReference type="SUPFAM" id="SSF69500">
    <property type="entry name" value="DTD-like"/>
    <property type="match status" value="1"/>
</dbReference>
<comment type="function">
    <text evidence="1">An aminoacyl-tRNA editing enzyme that deacylates mischarged D-aminoacyl-tRNAs. Also deacylates mischarged glycyl-tRNA(Ala), protecting cells against glycine mischarging by AlaRS. Acts via tRNA-based rather than protein-based catalysis; rejects L-amino acids rather than detecting D-amino acids in the active site. By recycling D-aminoacyl-tRNA to D-amino acids and free tRNA molecules, this enzyme counteracts the toxicity associated with the formation of D-aminoacyl-tRNA entities in vivo and helps enforce protein L-homochirality.</text>
</comment>
<comment type="catalytic activity">
    <reaction evidence="1">
        <text>glycyl-tRNA(Ala) + H2O = tRNA(Ala) + glycine + H(+)</text>
        <dbReference type="Rhea" id="RHEA:53744"/>
        <dbReference type="Rhea" id="RHEA-COMP:9657"/>
        <dbReference type="Rhea" id="RHEA-COMP:13640"/>
        <dbReference type="ChEBI" id="CHEBI:15377"/>
        <dbReference type="ChEBI" id="CHEBI:15378"/>
        <dbReference type="ChEBI" id="CHEBI:57305"/>
        <dbReference type="ChEBI" id="CHEBI:78442"/>
        <dbReference type="ChEBI" id="CHEBI:78522"/>
        <dbReference type="EC" id="3.1.1.96"/>
    </reaction>
</comment>
<comment type="catalytic activity">
    <reaction evidence="1">
        <text>a D-aminoacyl-tRNA + H2O = a tRNA + a D-alpha-amino acid + H(+)</text>
        <dbReference type="Rhea" id="RHEA:13953"/>
        <dbReference type="Rhea" id="RHEA-COMP:10123"/>
        <dbReference type="Rhea" id="RHEA-COMP:10124"/>
        <dbReference type="ChEBI" id="CHEBI:15377"/>
        <dbReference type="ChEBI" id="CHEBI:15378"/>
        <dbReference type="ChEBI" id="CHEBI:59871"/>
        <dbReference type="ChEBI" id="CHEBI:78442"/>
        <dbReference type="ChEBI" id="CHEBI:79333"/>
        <dbReference type="EC" id="3.1.1.96"/>
    </reaction>
</comment>
<comment type="subunit">
    <text evidence="1">Homodimer.</text>
</comment>
<comment type="subcellular location">
    <subcellularLocation>
        <location evidence="1">Cytoplasm</location>
    </subcellularLocation>
</comment>
<comment type="domain">
    <text evidence="1">A Gly-cisPro motif from one monomer fits into the active site of the other monomer to allow specific chiral rejection of L-amino acids.</text>
</comment>
<comment type="similarity">
    <text evidence="1">Belongs to the DTD family.</text>
</comment>